<organism>
    <name type="scientific">Leptospira borgpetersenii serovar Hardjo-bovis (strain L550)</name>
    <dbReference type="NCBI Taxonomy" id="355276"/>
    <lineage>
        <taxon>Bacteria</taxon>
        <taxon>Pseudomonadati</taxon>
        <taxon>Spirochaetota</taxon>
        <taxon>Spirochaetia</taxon>
        <taxon>Leptospirales</taxon>
        <taxon>Leptospiraceae</taxon>
        <taxon>Leptospira</taxon>
    </lineage>
</organism>
<name>ACP_LEPBL</name>
<comment type="function">
    <text evidence="1">Carrier of the growing fatty acid chain in fatty acid biosynthesis.</text>
</comment>
<comment type="pathway">
    <text evidence="1">Lipid metabolism; fatty acid biosynthesis.</text>
</comment>
<comment type="subcellular location">
    <subcellularLocation>
        <location evidence="1">Cytoplasm</location>
    </subcellularLocation>
</comment>
<comment type="PTM">
    <text evidence="1">4'-phosphopantetheine is transferred from CoA to a specific serine of apo-ACP by AcpS. This modification is essential for activity because fatty acids are bound in thioester linkage to the sulfhydryl of the prosthetic group.</text>
</comment>
<comment type="similarity">
    <text evidence="1">Belongs to the acyl carrier protein (ACP) family.</text>
</comment>
<gene>
    <name evidence="1" type="primary">acpP</name>
    <name type="ordered locus">LBL_0939</name>
</gene>
<reference key="1">
    <citation type="journal article" date="2006" name="Proc. Natl. Acad. Sci. U.S.A.">
        <title>Genome reduction in Leptospira borgpetersenii reflects limited transmission potential.</title>
        <authorList>
            <person name="Bulach D.M."/>
            <person name="Zuerner R.L."/>
            <person name="Wilson P."/>
            <person name="Seemann T."/>
            <person name="McGrath A."/>
            <person name="Cullen P.A."/>
            <person name="Davis J."/>
            <person name="Johnson M."/>
            <person name="Kuczek E."/>
            <person name="Alt D.P."/>
            <person name="Peterson-Burch B."/>
            <person name="Coppel R.L."/>
            <person name="Rood J.I."/>
            <person name="Davies J.K."/>
            <person name="Adler B."/>
        </authorList>
    </citation>
    <scope>NUCLEOTIDE SEQUENCE [LARGE SCALE GENOMIC DNA]</scope>
    <source>
        <strain>L550</strain>
    </source>
</reference>
<protein>
    <recommendedName>
        <fullName evidence="1">Acyl carrier protein</fullName>
        <shortName evidence="1">ACP</shortName>
    </recommendedName>
</protein>
<keyword id="KW-0963">Cytoplasm</keyword>
<keyword id="KW-0275">Fatty acid biosynthesis</keyword>
<keyword id="KW-0276">Fatty acid metabolism</keyword>
<keyword id="KW-0444">Lipid biosynthesis</keyword>
<keyword id="KW-0443">Lipid metabolism</keyword>
<keyword id="KW-0596">Phosphopantetheine</keyword>
<keyword id="KW-0597">Phosphoprotein</keyword>
<dbReference type="EMBL" id="CP000348">
    <property type="protein sequence ID" value="ABJ78480.1"/>
    <property type="molecule type" value="Genomic_DNA"/>
</dbReference>
<dbReference type="RefSeq" id="WP_000753030.1">
    <property type="nucleotide sequence ID" value="NC_008508.1"/>
</dbReference>
<dbReference type="SMR" id="Q053L5"/>
<dbReference type="GeneID" id="61173552"/>
<dbReference type="KEGG" id="lbl:LBL_0939"/>
<dbReference type="HOGENOM" id="CLU_108696_5_1_12"/>
<dbReference type="UniPathway" id="UPA00094"/>
<dbReference type="GO" id="GO:0005829">
    <property type="term" value="C:cytosol"/>
    <property type="evidence" value="ECO:0007669"/>
    <property type="project" value="TreeGrafter"/>
</dbReference>
<dbReference type="GO" id="GO:0016020">
    <property type="term" value="C:membrane"/>
    <property type="evidence" value="ECO:0007669"/>
    <property type="project" value="GOC"/>
</dbReference>
<dbReference type="GO" id="GO:0000035">
    <property type="term" value="F:acyl binding"/>
    <property type="evidence" value="ECO:0007669"/>
    <property type="project" value="TreeGrafter"/>
</dbReference>
<dbReference type="GO" id="GO:0000036">
    <property type="term" value="F:acyl carrier activity"/>
    <property type="evidence" value="ECO:0007669"/>
    <property type="project" value="UniProtKB-UniRule"/>
</dbReference>
<dbReference type="GO" id="GO:0009245">
    <property type="term" value="P:lipid A biosynthetic process"/>
    <property type="evidence" value="ECO:0007669"/>
    <property type="project" value="TreeGrafter"/>
</dbReference>
<dbReference type="FunFam" id="1.10.1200.10:FF:000001">
    <property type="entry name" value="Acyl carrier protein"/>
    <property type="match status" value="1"/>
</dbReference>
<dbReference type="Gene3D" id="1.10.1200.10">
    <property type="entry name" value="ACP-like"/>
    <property type="match status" value="1"/>
</dbReference>
<dbReference type="HAMAP" id="MF_01217">
    <property type="entry name" value="Acyl_carrier"/>
    <property type="match status" value="1"/>
</dbReference>
<dbReference type="InterPro" id="IPR003231">
    <property type="entry name" value="ACP"/>
</dbReference>
<dbReference type="InterPro" id="IPR036736">
    <property type="entry name" value="ACP-like_sf"/>
</dbReference>
<dbReference type="InterPro" id="IPR009081">
    <property type="entry name" value="PP-bd_ACP"/>
</dbReference>
<dbReference type="InterPro" id="IPR006162">
    <property type="entry name" value="Ppantetheine_attach_site"/>
</dbReference>
<dbReference type="NCBIfam" id="TIGR00517">
    <property type="entry name" value="acyl_carrier"/>
    <property type="match status" value="1"/>
</dbReference>
<dbReference type="NCBIfam" id="NF002148">
    <property type="entry name" value="PRK00982.1-2"/>
    <property type="match status" value="1"/>
</dbReference>
<dbReference type="NCBIfam" id="NF002149">
    <property type="entry name" value="PRK00982.1-3"/>
    <property type="match status" value="1"/>
</dbReference>
<dbReference type="NCBIfam" id="NF002150">
    <property type="entry name" value="PRK00982.1-4"/>
    <property type="match status" value="1"/>
</dbReference>
<dbReference type="NCBIfam" id="NF002151">
    <property type="entry name" value="PRK00982.1-5"/>
    <property type="match status" value="1"/>
</dbReference>
<dbReference type="PANTHER" id="PTHR20863">
    <property type="entry name" value="ACYL CARRIER PROTEIN"/>
    <property type="match status" value="1"/>
</dbReference>
<dbReference type="PANTHER" id="PTHR20863:SF76">
    <property type="entry name" value="CARRIER DOMAIN-CONTAINING PROTEIN"/>
    <property type="match status" value="1"/>
</dbReference>
<dbReference type="Pfam" id="PF00550">
    <property type="entry name" value="PP-binding"/>
    <property type="match status" value="1"/>
</dbReference>
<dbReference type="SUPFAM" id="SSF47336">
    <property type="entry name" value="ACP-like"/>
    <property type="match status" value="1"/>
</dbReference>
<dbReference type="PROSITE" id="PS50075">
    <property type="entry name" value="CARRIER"/>
    <property type="match status" value="1"/>
</dbReference>
<dbReference type="PROSITE" id="PS00012">
    <property type="entry name" value="PHOSPHOPANTETHEINE"/>
    <property type="match status" value="1"/>
</dbReference>
<evidence type="ECO:0000255" key="1">
    <source>
        <dbReference type="HAMAP-Rule" id="MF_01217"/>
    </source>
</evidence>
<evidence type="ECO:0000255" key="2">
    <source>
        <dbReference type="PROSITE-ProRule" id="PRU00258"/>
    </source>
</evidence>
<feature type="chain" id="PRO_1000066632" description="Acyl carrier protein">
    <location>
        <begin position="1"/>
        <end position="77"/>
    </location>
</feature>
<feature type="domain" description="Carrier" evidence="2">
    <location>
        <begin position="1"/>
        <end position="76"/>
    </location>
</feature>
<feature type="modified residue" description="O-(pantetheine 4'-phosphoryl)serine" evidence="2">
    <location>
        <position position="36"/>
    </location>
</feature>
<sequence>MADFEKVKSIIVEQLGVDESEVTPEAHFIDDLGADSLDTVELVMALEEEFGIEISDEDAEKIQTVGDVTKFIDNLKS</sequence>
<proteinExistence type="inferred from homology"/>
<accession>Q053L5</accession>